<protein>
    <recommendedName>
        <fullName evidence="1">Enolase-phosphatase E1</fullName>
        <ecNumber evidence="1">3.1.3.77</ecNumber>
    </recommendedName>
    <alternativeName>
        <fullName evidence="1">2,3-diketo-5-methylthio-1-phosphopentane phosphatase</fullName>
    </alternativeName>
</protein>
<comment type="function">
    <text evidence="1">Bifunctional enzyme that catalyzes the enolization of 2,3-diketo-5-methylthiopentyl-1-phosphate (DK-MTP-1-P) into the intermediate 2-hydroxy-3-keto-5-methylthiopentenyl-1-phosphate (HK-MTPenyl-1-P), which is then dephosphorylated to form the acireductone 1,2-dihydroxy-3-keto-5-methylthiopentene (DHK-MTPene).</text>
</comment>
<comment type="catalytic activity">
    <reaction evidence="1">
        <text>5-methylsulfanyl-2,3-dioxopentyl phosphate + H2O = 1,2-dihydroxy-5-(methylsulfanyl)pent-1-en-3-one + phosphate</text>
        <dbReference type="Rhea" id="RHEA:21700"/>
        <dbReference type="ChEBI" id="CHEBI:15377"/>
        <dbReference type="ChEBI" id="CHEBI:43474"/>
        <dbReference type="ChEBI" id="CHEBI:49252"/>
        <dbReference type="ChEBI" id="CHEBI:58828"/>
        <dbReference type="EC" id="3.1.3.77"/>
    </reaction>
</comment>
<comment type="cofactor">
    <cofactor evidence="1">
        <name>Mg(2+)</name>
        <dbReference type="ChEBI" id="CHEBI:18420"/>
    </cofactor>
    <text evidence="1">Binds 1 Mg(2+) ion per subunit.</text>
</comment>
<comment type="pathway">
    <text evidence="1">Amino-acid biosynthesis; L-methionine biosynthesis via salvage pathway; L-methionine from S-methyl-5-thio-alpha-D-ribose 1-phosphate: step 3/6.</text>
</comment>
<comment type="pathway">
    <text evidence="1">Amino-acid biosynthesis; L-methionine biosynthesis via salvage pathway; L-methionine from S-methyl-5-thio-alpha-D-ribose 1-phosphate: step 4/6.</text>
</comment>
<comment type="subunit">
    <text evidence="1">Monomer.</text>
</comment>
<comment type="subcellular location">
    <subcellularLocation>
        <location evidence="1">Cytoplasm</location>
    </subcellularLocation>
    <subcellularLocation>
        <location evidence="1">Nucleus</location>
    </subcellularLocation>
</comment>
<comment type="similarity">
    <text evidence="1">Belongs to the HAD-like hydrolase superfamily. MasA/MtnC family.</text>
</comment>
<name>ENOPH_CANDC</name>
<reference key="1">
    <citation type="journal article" date="2009" name="Genome Res.">
        <title>Comparative genomics of the fungal pathogens Candida dubliniensis and Candida albicans.</title>
        <authorList>
            <person name="Jackson A.P."/>
            <person name="Gamble J.A."/>
            <person name="Yeomans T."/>
            <person name="Moran G.P."/>
            <person name="Saunders D."/>
            <person name="Harris D."/>
            <person name="Aslett M."/>
            <person name="Barrell J.F."/>
            <person name="Butler G."/>
            <person name="Citiulo F."/>
            <person name="Coleman D.C."/>
            <person name="de Groot P.W.J."/>
            <person name="Goodwin T.J."/>
            <person name="Quail M.A."/>
            <person name="McQuillan J."/>
            <person name="Munro C.A."/>
            <person name="Pain A."/>
            <person name="Poulter R.T."/>
            <person name="Rajandream M.A."/>
            <person name="Renauld H."/>
            <person name="Spiering M.J."/>
            <person name="Tivey A."/>
            <person name="Gow N.A.R."/>
            <person name="Barrell B."/>
            <person name="Sullivan D.J."/>
            <person name="Berriman M."/>
        </authorList>
    </citation>
    <scope>NUCLEOTIDE SEQUENCE [LARGE SCALE GENOMIC DNA]</scope>
    <source>
        <strain>CD36 / ATCC MYA-646 / CBS 7987 / NCPF 3949 / NRRL Y-17841</strain>
    </source>
</reference>
<sequence length="271" mass="30778">MASTTNNTPIDTVILDIEGTVCPITFVKDTLFPYFIEKLPSILQKFQYPLPTTTTSDNDDDDDDDPVLNILKQLPENIIQSWESIFNHFKNLVDQDIKDPILKSLQGLIWKQGYENNELKAPIYQDSIKFIESFPTVKSKDNQRKIYIYSSGSIKAQILLFGHVKNSSTSTTSSSIDNDTIDLNDKLNGYFDITTVGFKNQSNSYIKILQEINKSQYPQSVLFLSDNINEVNAAINAGMKSYIVIRPGNSPINDEDKKFHKIIYSLDELDL</sequence>
<feature type="chain" id="PRO_0000393994" description="Enolase-phosphatase E1">
    <location>
        <begin position="1"/>
        <end position="271"/>
    </location>
</feature>
<feature type="binding site" evidence="1">
    <location>
        <position position="16"/>
    </location>
    <ligand>
        <name>Mg(2+)</name>
        <dbReference type="ChEBI" id="CHEBI:18420"/>
    </ligand>
</feature>
<feature type="binding site" evidence="1">
    <location>
        <position position="18"/>
    </location>
    <ligand>
        <name>Mg(2+)</name>
        <dbReference type="ChEBI" id="CHEBI:18420"/>
    </ligand>
</feature>
<feature type="binding site" evidence="1">
    <location>
        <begin position="150"/>
        <end position="151"/>
    </location>
    <ligand>
        <name>substrate</name>
    </ligand>
</feature>
<feature type="binding site" evidence="1">
    <location>
        <position position="199"/>
    </location>
    <ligand>
        <name>substrate</name>
    </ligand>
</feature>
<feature type="binding site" evidence="1">
    <location>
        <position position="226"/>
    </location>
    <ligand>
        <name>Mg(2+)</name>
        <dbReference type="ChEBI" id="CHEBI:18420"/>
    </ligand>
</feature>
<keyword id="KW-0028">Amino-acid biosynthesis</keyword>
<keyword id="KW-0963">Cytoplasm</keyword>
<keyword id="KW-0378">Hydrolase</keyword>
<keyword id="KW-0460">Magnesium</keyword>
<keyword id="KW-0479">Metal-binding</keyword>
<keyword id="KW-0486">Methionine biosynthesis</keyword>
<keyword id="KW-0539">Nucleus</keyword>
<proteinExistence type="inferred from homology"/>
<dbReference type="EC" id="3.1.3.77" evidence="1"/>
<dbReference type="EMBL" id="FM992689">
    <property type="protein sequence ID" value="CAX43448.1"/>
    <property type="molecule type" value="Genomic_DNA"/>
</dbReference>
<dbReference type="RefSeq" id="XP_002418148.1">
    <property type="nucleotide sequence ID" value="XM_002418103.1"/>
</dbReference>
<dbReference type="SMR" id="B9WAM8"/>
<dbReference type="GeneID" id="8045715"/>
<dbReference type="KEGG" id="cdu:CD36_16690"/>
<dbReference type="CGD" id="CAL0000169147">
    <property type="gene designation" value="Cd36_16690"/>
</dbReference>
<dbReference type="VEuPathDB" id="FungiDB:CD36_16690"/>
<dbReference type="eggNOG" id="KOG2630">
    <property type="taxonomic scope" value="Eukaryota"/>
</dbReference>
<dbReference type="HOGENOM" id="CLU_023273_1_1_1"/>
<dbReference type="OrthoDB" id="272500at2759"/>
<dbReference type="UniPathway" id="UPA00904">
    <property type="reaction ID" value="UER00876"/>
</dbReference>
<dbReference type="UniPathway" id="UPA00904">
    <property type="reaction ID" value="UER00877"/>
</dbReference>
<dbReference type="Proteomes" id="UP000002605">
    <property type="component" value="Chromosome 2"/>
</dbReference>
<dbReference type="GO" id="GO:0005737">
    <property type="term" value="C:cytoplasm"/>
    <property type="evidence" value="ECO:0007669"/>
    <property type="project" value="UniProtKB-SubCell"/>
</dbReference>
<dbReference type="GO" id="GO:0005634">
    <property type="term" value="C:nucleus"/>
    <property type="evidence" value="ECO:0007669"/>
    <property type="project" value="UniProtKB-SubCell"/>
</dbReference>
<dbReference type="GO" id="GO:0043874">
    <property type="term" value="F:acireductone synthase activity"/>
    <property type="evidence" value="ECO:0007669"/>
    <property type="project" value="UniProtKB-EC"/>
</dbReference>
<dbReference type="GO" id="GO:0000287">
    <property type="term" value="F:magnesium ion binding"/>
    <property type="evidence" value="ECO:0007669"/>
    <property type="project" value="UniProtKB-UniRule"/>
</dbReference>
<dbReference type="GO" id="GO:0019509">
    <property type="term" value="P:L-methionine salvage from methylthioadenosine"/>
    <property type="evidence" value="ECO:0007669"/>
    <property type="project" value="UniProtKB-UniRule"/>
</dbReference>
<dbReference type="Gene3D" id="1.10.720.60">
    <property type="match status" value="1"/>
</dbReference>
<dbReference type="Gene3D" id="3.40.50.1000">
    <property type="entry name" value="HAD superfamily/HAD-like"/>
    <property type="match status" value="1"/>
</dbReference>
<dbReference type="HAMAP" id="MF_03117">
    <property type="entry name" value="Salvage_MtnC_euk"/>
    <property type="match status" value="1"/>
</dbReference>
<dbReference type="InterPro" id="IPR023943">
    <property type="entry name" value="Enolase-ppase_E1"/>
</dbReference>
<dbReference type="InterPro" id="IPR027511">
    <property type="entry name" value="ENOPH1_eukaryotes"/>
</dbReference>
<dbReference type="InterPro" id="IPR036412">
    <property type="entry name" value="HAD-like_sf"/>
</dbReference>
<dbReference type="InterPro" id="IPR023214">
    <property type="entry name" value="HAD_sf"/>
</dbReference>
<dbReference type="NCBIfam" id="TIGR01691">
    <property type="entry name" value="enolase-ppase"/>
    <property type="match status" value="1"/>
</dbReference>
<dbReference type="PANTHER" id="PTHR20371">
    <property type="entry name" value="ENOLASE-PHOSPHATASE E1"/>
    <property type="match status" value="1"/>
</dbReference>
<dbReference type="PANTHER" id="PTHR20371:SF1">
    <property type="entry name" value="ENOLASE-PHOSPHATASE E1"/>
    <property type="match status" value="1"/>
</dbReference>
<dbReference type="Pfam" id="PF00702">
    <property type="entry name" value="Hydrolase"/>
    <property type="match status" value="1"/>
</dbReference>
<dbReference type="SFLD" id="SFLDG01133">
    <property type="entry name" value="C1.5.4:_Enolase-phosphatase_Li"/>
    <property type="match status" value="1"/>
</dbReference>
<dbReference type="SFLD" id="SFLDG01129">
    <property type="entry name" value="C1.5:_HAD__Beta-PGM__Phosphata"/>
    <property type="match status" value="1"/>
</dbReference>
<dbReference type="SUPFAM" id="SSF56784">
    <property type="entry name" value="HAD-like"/>
    <property type="match status" value="1"/>
</dbReference>
<evidence type="ECO:0000255" key="1">
    <source>
        <dbReference type="HAMAP-Rule" id="MF_03117"/>
    </source>
</evidence>
<gene>
    <name evidence="1" type="primary">UTR4</name>
    <name type="ORF">CD36_16690</name>
</gene>
<organism>
    <name type="scientific">Candida dubliniensis (strain CD36 / ATCC MYA-646 / CBS 7987 / NCPF 3949 / NRRL Y-17841)</name>
    <name type="common">Yeast</name>
    <dbReference type="NCBI Taxonomy" id="573826"/>
    <lineage>
        <taxon>Eukaryota</taxon>
        <taxon>Fungi</taxon>
        <taxon>Dikarya</taxon>
        <taxon>Ascomycota</taxon>
        <taxon>Saccharomycotina</taxon>
        <taxon>Pichiomycetes</taxon>
        <taxon>Debaryomycetaceae</taxon>
        <taxon>Candida/Lodderomyces clade</taxon>
        <taxon>Candida</taxon>
    </lineage>
</organism>
<accession>B9WAM8</accession>